<feature type="chain" id="PRO_0000167964" description="Small ribosomal subunit protein bS20">
    <location>
        <begin position="1"/>
        <end position="89"/>
    </location>
</feature>
<feature type="region of interest" description="Disordered" evidence="2">
    <location>
        <begin position="1"/>
        <end position="25"/>
    </location>
</feature>
<feature type="region of interest" description="Disordered" evidence="2">
    <location>
        <begin position="69"/>
        <end position="89"/>
    </location>
</feature>
<feature type="compositionally biased region" description="Basic residues" evidence="2">
    <location>
        <begin position="7"/>
        <end position="20"/>
    </location>
</feature>
<protein>
    <recommendedName>
        <fullName evidence="1">Small ribosomal subunit protein bS20</fullName>
    </recommendedName>
    <alternativeName>
        <fullName evidence="3">30S ribosomal protein S20</fullName>
    </alternativeName>
</protein>
<gene>
    <name evidence="1" type="primary">rpsT</name>
    <name type="ordered locus">GK2512</name>
</gene>
<organism>
    <name type="scientific">Geobacillus kaustophilus (strain HTA426)</name>
    <dbReference type="NCBI Taxonomy" id="235909"/>
    <lineage>
        <taxon>Bacteria</taxon>
        <taxon>Bacillati</taxon>
        <taxon>Bacillota</taxon>
        <taxon>Bacilli</taxon>
        <taxon>Bacillales</taxon>
        <taxon>Anoxybacillaceae</taxon>
        <taxon>Geobacillus</taxon>
        <taxon>Geobacillus thermoleovorans group</taxon>
    </lineage>
</organism>
<dbReference type="EMBL" id="BA000043">
    <property type="protein sequence ID" value="BAD76797.1"/>
    <property type="molecule type" value="Genomic_DNA"/>
</dbReference>
<dbReference type="RefSeq" id="WP_011231991.1">
    <property type="nucleotide sequence ID" value="NC_006510.1"/>
</dbReference>
<dbReference type="SMR" id="Q5KWY9"/>
<dbReference type="STRING" id="235909.GK2512"/>
<dbReference type="GeneID" id="32064393"/>
<dbReference type="KEGG" id="gka:GK2512"/>
<dbReference type="eggNOG" id="COG0268">
    <property type="taxonomic scope" value="Bacteria"/>
</dbReference>
<dbReference type="HOGENOM" id="CLU_160655_1_0_9"/>
<dbReference type="Proteomes" id="UP000001172">
    <property type="component" value="Chromosome"/>
</dbReference>
<dbReference type="GO" id="GO:0005829">
    <property type="term" value="C:cytosol"/>
    <property type="evidence" value="ECO:0007669"/>
    <property type="project" value="TreeGrafter"/>
</dbReference>
<dbReference type="GO" id="GO:0015935">
    <property type="term" value="C:small ribosomal subunit"/>
    <property type="evidence" value="ECO:0007669"/>
    <property type="project" value="TreeGrafter"/>
</dbReference>
<dbReference type="GO" id="GO:0070181">
    <property type="term" value="F:small ribosomal subunit rRNA binding"/>
    <property type="evidence" value="ECO:0007669"/>
    <property type="project" value="TreeGrafter"/>
</dbReference>
<dbReference type="GO" id="GO:0003735">
    <property type="term" value="F:structural constituent of ribosome"/>
    <property type="evidence" value="ECO:0007669"/>
    <property type="project" value="InterPro"/>
</dbReference>
<dbReference type="GO" id="GO:0006412">
    <property type="term" value="P:translation"/>
    <property type="evidence" value="ECO:0007669"/>
    <property type="project" value="UniProtKB-UniRule"/>
</dbReference>
<dbReference type="FunFam" id="1.20.58.110:FF:000001">
    <property type="entry name" value="30S ribosomal protein S20"/>
    <property type="match status" value="1"/>
</dbReference>
<dbReference type="Gene3D" id="1.20.58.110">
    <property type="entry name" value="Ribosomal protein S20"/>
    <property type="match status" value="1"/>
</dbReference>
<dbReference type="HAMAP" id="MF_00500">
    <property type="entry name" value="Ribosomal_bS20"/>
    <property type="match status" value="1"/>
</dbReference>
<dbReference type="InterPro" id="IPR002583">
    <property type="entry name" value="Ribosomal_bS20"/>
</dbReference>
<dbReference type="InterPro" id="IPR036510">
    <property type="entry name" value="Ribosomal_bS20_sf"/>
</dbReference>
<dbReference type="NCBIfam" id="TIGR00029">
    <property type="entry name" value="S20"/>
    <property type="match status" value="1"/>
</dbReference>
<dbReference type="PANTHER" id="PTHR33398">
    <property type="entry name" value="30S RIBOSOMAL PROTEIN S20"/>
    <property type="match status" value="1"/>
</dbReference>
<dbReference type="PANTHER" id="PTHR33398:SF1">
    <property type="entry name" value="SMALL RIBOSOMAL SUBUNIT PROTEIN BS20C"/>
    <property type="match status" value="1"/>
</dbReference>
<dbReference type="Pfam" id="PF01649">
    <property type="entry name" value="Ribosomal_S20p"/>
    <property type="match status" value="1"/>
</dbReference>
<dbReference type="SUPFAM" id="SSF46992">
    <property type="entry name" value="Ribosomal protein S20"/>
    <property type="match status" value="1"/>
</dbReference>
<sequence length="89" mass="9849">MANIKSAIKRAKTSEKRRAHNASMKSAMRTAIKKFEALVELKDVEKAREAFIIASKKLDKAASKGLIHKNAASRQKSRLAKKLNSIQAS</sequence>
<keyword id="KW-1185">Reference proteome</keyword>
<keyword id="KW-0687">Ribonucleoprotein</keyword>
<keyword id="KW-0689">Ribosomal protein</keyword>
<keyword id="KW-0694">RNA-binding</keyword>
<keyword id="KW-0699">rRNA-binding</keyword>
<evidence type="ECO:0000255" key="1">
    <source>
        <dbReference type="HAMAP-Rule" id="MF_00500"/>
    </source>
</evidence>
<evidence type="ECO:0000256" key="2">
    <source>
        <dbReference type="SAM" id="MobiDB-lite"/>
    </source>
</evidence>
<evidence type="ECO:0000305" key="3"/>
<proteinExistence type="inferred from homology"/>
<name>RS20_GEOKA</name>
<reference key="1">
    <citation type="journal article" date="2004" name="Nucleic Acids Res.">
        <title>Thermoadaptation trait revealed by the genome sequence of thermophilic Geobacillus kaustophilus.</title>
        <authorList>
            <person name="Takami H."/>
            <person name="Takaki Y."/>
            <person name="Chee G.-J."/>
            <person name="Nishi S."/>
            <person name="Shimamura S."/>
            <person name="Suzuki H."/>
            <person name="Matsui S."/>
            <person name="Uchiyama I."/>
        </authorList>
    </citation>
    <scope>NUCLEOTIDE SEQUENCE [LARGE SCALE GENOMIC DNA]</scope>
    <source>
        <strain>HTA426</strain>
    </source>
</reference>
<accession>Q5KWY9</accession>
<comment type="function">
    <text evidence="1">Binds directly to 16S ribosomal RNA.</text>
</comment>
<comment type="similarity">
    <text evidence="1">Belongs to the bacterial ribosomal protein bS20 family.</text>
</comment>